<gene>
    <name evidence="1" type="primary">rplB</name>
    <name type="ordered locus">cu0318</name>
</gene>
<name>RL2_CORU7</name>
<organism>
    <name type="scientific">Corynebacterium urealyticum (strain ATCC 43042 / DSM 7109)</name>
    <dbReference type="NCBI Taxonomy" id="504474"/>
    <lineage>
        <taxon>Bacteria</taxon>
        <taxon>Bacillati</taxon>
        <taxon>Actinomycetota</taxon>
        <taxon>Actinomycetes</taxon>
        <taxon>Mycobacteriales</taxon>
        <taxon>Corynebacteriaceae</taxon>
        <taxon>Corynebacterium</taxon>
    </lineage>
</organism>
<sequence length="278" mass="30945">MAIRKYKPTTPGRRASSVSEFSEITRSTPEKSLLRPLSKTGGRNVHGHITTRHKGGGHKRRYRVIDFRRNDKDGVVAKVAHIEYDPNRTANIALLHYRDGEKRYIIAPRGLKQGALVESGPNADIKVGNNLPLRNIPAGTTIHCVELKPGGGAKMARSAGASIQLLGKEGKYAVLRMPSSEIRRVDIRCRATVGEVGNQEQINIRWGKAGRMRWKGWRPTVRGAAMNPVDHPHGGGEGRTSGGRHPVSPWGQLEGRTRRPNRPSDKMIVRRRRPNKKR</sequence>
<keyword id="KW-1185">Reference proteome</keyword>
<keyword id="KW-0687">Ribonucleoprotein</keyword>
<keyword id="KW-0689">Ribosomal protein</keyword>
<keyword id="KW-0694">RNA-binding</keyword>
<keyword id="KW-0699">rRNA-binding</keyword>
<reference key="1">
    <citation type="journal article" date="2008" name="J. Biotechnol.">
        <title>The lifestyle of Corynebacterium urealyticum derived from its complete genome sequence established by pyrosequencing.</title>
        <authorList>
            <person name="Tauch A."/>
            <person name="Trost E."/>
            <person name="Tilker A."/>
            <person name="Ludewig U."/>
            <person name="Schneiker S."/>
            <person name="Goesmann A."/>
            <person name="Arnold W."/>
            <person name="Bekel T."/>
            <person name="Brinkrolf K."/>
            <person name="Brune I."/>
            <person name="Goetker S."/>
            <person name="Kalinowski J."/>
            <person name="Kamp P.-B."/>
            <person name="Lobo F.P."/>
            <person name="Viehoever P."/>
            <person name="Weisshaar B."/>
            <person name="Soriano F."/>
            <person name="Droege M."/>
            <person name="Puehler A."/>
        </authorList>
    </citation>
    <scope>NUCLEOTIDE SEQUENCE [LARGE SCALE GENOMIC DNA]</scope>
    <source>
        <strain>ATCC 43042 / DSM 7109</strain>
    </source>
</reference>
<accession>B1VET9</accession>
<comment type="function">
    <text evidence="1">One of the primary rRNA binding proteins. Required for association of the 30S and 50S subunits to form the 70S ribosome, for tRNA binding and peptide bond formation. It has been suggested to have peptidyltransferase activity; this is somewhat controversial. Makes several contacts with the 16S rRNA in the 70S ribosome.</text>
</comment>
<comment type="subunit">
    <text evidence="1">Part of the 50S ribosomal subunit. Forms a bridge to the 30S subunit in the 70S ribosome.</text>
</comment>
<comment type="similarity">
    <text evidence="1">Belongs to the universal ribosomal protein uL2 family.</text>
</comment>
<evidence type="ECO:0000255" key="1">
    <source>
        <dbReference type="HAMAP-Rule" id="MF_01320"/>
    </source>
</evidence>
<evidence type="ECO:0000256" key="2">
    <source>
        <dbReference type="SAM" id="MobiDB-lite"/>
    </source>
</evidence>
<evidence type="ECO:0000305" key="3"/>
<dbReference type="EMBL" id="AM942444">
    <property type="protein sequence ID" value="CAQ04278.1"/>
    <property type="molecule type" value="Genomic_DNA"/>
</dbReference>
<dbReference type="RefSeq" id="WP_012359578.1">
    <property type="nucleotide sequence ID" value="NC_010545.1"/>
</dbReference>
<dbReference type="SMR" id="B1VET9"/>
<dbReference type="STRING" id="504474.cu0318"/>
<dbReference type="GeneID" id="60605121"/>
<dbReference type="KEGG" id="cur:cu0318"/>
<dbReference type="eggNOG" id="COG0090">
    <property type="taxonomic scope" value="Bacteria"/>
</dbReference>
<dbReference type="HOGENOM" id="CLU_036235_2_1_11"/>
<dbReference type="Proteomes" id="UP000001727">
    <property type="component" value="Chromosome"/>
</dbReference>
<dbReference type="GO" id="GO:0015934">
    <property type="term" value="C:large ribosomal subunit"/>
    <property type="evidence" value="ECO:0007669"/>
    <property type="project" value="InterPro"/>
</dbReference>
<dbReference type="GO" id="GO:0019843">
    <property type="term" value="F:rRNA binding"/>
    <property type="evidence" value="ECO:0007669"/>
    <property type="project" value="UniProtKB-UniRule"/>
</dbReference>
<dbReference type="GO" id="GO:0003735">
    <property type="term" value="F:structural constituent of ribosome"/>
    <property type="evidence" value="ECO:0007669"/>
    <property type="project" value="InterPro"/>
</dbReference>
<dbReference type="GO" id="GO:0016740">
    <property type="term" value="F:transferase activity"/>
    <property type="evidence" value="ECO:0007669"/>
    <property type="project" value="InterPro"/>
</dbReference>
<dbReference type="GO" id="GO:0002181">
    <property type="term" value="P:cytoplasmic translation"/>
    <property type="evidence" value="ECO:0007669"/>
    <property type="project" value="TreeGrafter"/>
</dbReference>
<dbReference type="FunFam" id="2.30.30.30:FF:000001">
    <property type="entry name" value="50S ribosomal protein L2"/>
    <property type="match status" value="1"/>
</dbReference>
<dbReference type="FunFam" id="2.40.50.140:FF:000003">
    <property type="entry name" value="50S ribosomal protein L2"/>
    <property type="match status" value="1"/>
</dbReference>
<dbReference type="FunFam" id="4.10.950.10:FF:000001">
    <property type="entry name" value="50S ribosomal protein L2"/>
    <property type="match status" value="1"/>
</dbReference>
<dbReference type="Gene3D" id="2.30.30.30">
    <property type="match status" value="1"/>
</dbReference>
<dbReference type="Gene3D" id="2.40.50.140">
    <property type="entry name" value="Nucleic acid-binding proteins"/>
    <property type="match status" value="1"/>
</dbReference>
<dbReference type="Gene3D" id="4.10.950.10">
    <property type="entry name" value="Ribosomal protein L2, domain 3"/>
    <property type="match status" value="1"/>
</dbReference>
<dbReference type="HAMAP" id="MF_01320_B">
    <property type="entry name" value="Ribosomal_uL2_B"/>
    <property type="match status" value="1"/>
</dbReference>
<dbReference type="InterPro" id="IPR012340">
    <property type="entry name" value="NA-bd_OB-fold"/>
</dbReference>
<dbReference type="InterPro" id="IPR014722">
    <property type="entry name" value="Rib_uL2_dom2"/>
</dbReference>
<dbReference type="InterPro" id="IPR002171">
    <property type="entry name" value="Ribosomal_uL2"/>
</dbReference>
<dbReference type="InterPro" id="IPR005880">
    <property type="entry name" value="Ribosomal_uL2_bac/org-type"/>
</dbReference>
<dbReference type="InterPro" id="IPR022669">
    <property type="entry name" value="Ribosomal_uL2_C"/>
</dbReference>
<dbReference type="InterPro" id="IPR022671">
    <property type="entry name" value="Ribosomal_uL2_CS"/>
</dbReference>
<dbReference type="InterPro" id="IPR014726">
    <property type="entry name" value="Ribosomal_uL2_dom3"/>
</dbReference>
<dbReference type="InterPro" id="IPR022666">
    <property type="entry name" value="Ribosomal_uL2_RNA-bd_dom"/>
</dbReference>
<dbReference type="InterPro" id="IPR008991">
    <property type="entry name" value="Translation_prot_SH3-like_sf"/>
</dbReference>
<dbReference type="NCBIfam" id="TIGR01171">
    <property type="entry name" value="rplB_bact"/>
    <property type="match status" value="1"/>
</dbReference>
<dbReference type="PANTHER" id="PTHR13691:SF5">
    <property type="entry name" value="LARGE RIBOSOMAL SUBUNIT PROTEIN UL2M"/>
    <property type="match status" value="1"/>
</dbReference>
<dbReference type="PANTHER" id="PTHR13691">
    <property type="entry name" value="RIBOSOMAL PROTEIN L2"/>
    <property type="match status" value="1"/>
</dbReference>
<dbReference type="Pfam" id="PF00181">
    <property type="entry name" value="Ribosomal_L2"/>
    <property type="match status" value="1"/>
</dbReference>
<dbReference type="Pfam" id="PF03947">
    <property type="entry name" value="Ribosomal_L2_C"/>
    <property type="match status" value="1"/>
</dbReference>
<dbReference type="PIRSF" id="PIRSF002158">
    <property type="entry name" value="Ribosomal_L2"/>
    <property type="match status" value="1"/>
</dbReference>
<dbReference type="SMART" id="SM01383">
    <property type="entry name" value="Ribosomal_L2"/>
    <property type="match status" value="1"/>
</dbReference>
<dbReference type="SMART" id="SM01382">
    <property type="entry name" value="Ribosomal_L2_C"/>
    <property type="match status" value="1"/>
</dbReference>
<dbReference type="SUPFAM" id="SSF50249">
    <property type="entry name" value="Nucleic acid-binding proteins"/>
    <property type="match status" value="1"/>
</dbReference>
<dbReference type="SUPFAM" id="SSF50104">
    <property type="entry name" value="Translation proteins SH3-like domain"/>
    <property type="match status" value="1"/>
</dbReference>
<dbReference type="PROSITE" id="PS00467">
    <property type="entry name" value="RIBOSOMAL_L2"/>
    <property type="match status" value="1"/>
</dbReference>
<proteinExistence type="inferred from homology"/>
<feature type="chain" id="PRO_1000141532" description="Large ribosomal subunit protein uL2">
    <location>
        <begin position="1"/>
        <end position="278"/>
    </location>
</feature>
<feature type="region of interest" description="Disordered" evidence="2">
    <location>
        <begin position="1"/>
        <end position="59"/>
    </location>
</feature>
<feature type="region of interest" description="Disordered" evidence="2">
    <location>
        <begin position="222"/>
        <end position="278"/>
    </location>
</feature>
<feature type="compositionally biased region" description="Polar residues" evidence="2">
    <location>
        <begin position="16"/>
        <end position="27"/>
    </location>
</feature>
<feature type="compositionally biased region" description="Basic residues" evidence="2">
    <location>
        <begin position="45"/>
        <end position="59"/>
    </location>
</feature>
<feature type="compositionally biased region" description="Basic residues" evidence="2">
    <location>
        <begin position="269"/>
        <end position="278"/>
    </location>
</feature>
<protein>
    <recommendedName>
        <fullName evidence="1">Large ribosomal subunit protein uL2</fullName>
    </recommendedName>
    <alternativeName>
        <fullName evidence="3">50S ribosomal protein L2</fullName>
    </alternativeName>
</protein>